<sequence>MQSFLSVWLVKHGIIHRSLGFDYQGIETLQIKPEDWHSVAVILYVYGYNYLRSQCAYDVAPGGLLASVYHLTRIEYGVTRIEYGAYQPEEVCIKVFASRKNSRIPSVFWIWKSADFQERESYDMLGISYDNHPRLKRILMPESWIGWPLRKDYVAPHFYEIQDAH</sequence>
<protein>
    <recommendedName>
        <fullName evidence="1">NAD(P)H-quinone oxidoreductase subunit J, chloroplastic</fullName>
        <ecNumber evidence="1">7.1.1.-</ecNumber>
    </recommendedName>
    <alternativeName>
        <fullName>NAD(P)H dehydrogenase subunit J</fullName>
    </alternativeName>
    <alternativeName>
        <fullName evidence="1">NADH-plastoquinone oxidoreductase subunit J</fullName>
    </alternativeName>
</protein>
<proteinExistence type="inferred from homology"/>
<evidence type="ECO:0000255" key="1">
    <source>
        <dbReference type="HAMAP-Rule" id="MF_01357"/>
    </source>
</evidence>
<gene>
    <name evidence="1" type="primary">ndhJ</name>
</gene>
<geneLocation type="chloroplast"/>
<feature type="chain" id="PRO_0000358273" description="NAD(P)H-quinone oxidoreductase subunit J, chloroplastic">
    <location>
        <begin position="1"/>
        <end position="165"/>
    </location>
</feature>
<dbReference type="EC" id="7.1.1.-" evidence="1"/>
<dbReference type="EMBL" id="EU118126">
    <property type="protein sequence ID" value="ABV02351.1"/>
    <property type="molecule type" value="Genomic_DNA"/>
</dbReference>
<dbReference type="RefSeq" id="YP_001468311.1">
    <property type="nucleotide sequence ID" value="NC_009808.1"/>
</dbReference>
<dbReference type="SMR" id="A7Y3E0"/>
<dbReference type="GeneID" id="5601309"/>
<dbReference type="GO" id="GO:0009535">
    <property type="term" value="C:chloroplast thylakoid membrane"/>
    <property type="evidence" value="ECO:0007669"/>
    <property type="project" value="UniProtKB-SubCell"/>
</dbReference>
<dbReference type="GO" id="GO:0008137">
    <property type="term" value="F:NADH dehydrogenase (ubiquinone) activity"/>
    <property type="evidence" value="ECO:0007669"/>
    <property type="project" value="InterPro"/>
</dbReference>
<dbReference type="GO" id="GO:0048038">
    <property type="term" value="F:quinone binding"/>
    <property type="evidence" value="ECO:0007669"/>
    <property type="project" value="UniProtKB-KW"/>
</dbReference>
<dbReference type="GO" id="GO:0019684">
    <property type="term" value="P:photosynthesis, light reaction"/>
    <property type="evidence" value="ECO:0007669"/>
    <property type="project" value="UniProtKB-UniRule"/>
</dbReference>
<dbReference type="FunFam" id="3.30.460.80:FF:000004">
    <property type="entry name" value="NAD(P)H-quinone oxidoreductase subunit J, chloroplastic"/>
    <property type="match status" value="1"/>
</dbReference>
<dbReference type="Gene3D" id="3.30.460.80">
    <property type="entry name" value="NADH:ubiquinone oxidoreductase, 30kDa subunit"/>
    <property type="match status" value="1"/>
</dbReference>
<dbReference type="HAMAP" id="MF_01357">
    <property type="entry name" value="NDH1_NuoC"/>
    <property type="match status" value="1"/>
</dbReference>
<dbReference type="InterPro" id="IPR010218">
    <property type="entry name" value="NADH_DH_suC"/>
</dbReference>
<dbReference type="InterPro" id="IPR037232">
    <property type="entry name" value="NADH_quin_OxRdtase_su_C/D-like"/>
</dbReference>
<dbReference type="InterPro" id="IPR001268">
    <property type="entry name" value="NADH_UbQ_OxRdtase_30kDa_su"/>
</dbReference>
<dbReference type="InterPro" id="IPR020396">
    <property type="entry name" value="NADH_UbQ_OxRdtase_CS"/>
</dbReference>
<dbReference type="NCBIfam" id="NF009141">
    <property type="entry name" value="PRK12494.1"/>
    <property type="match status" value="1"/>
</dbReference>
<dbReference type="PANTHER" id="PTHR10884:SF14">
    <property type="entry name" value="NADH DEHYDROGENASE [UBIQUINONE] IRON-SULFUR PROTEIN 3, MITOCHONDRIAL"/>
    <property type="match status" value="1"/>
</dbReference>
<dbReference type="PANTHER" id="PTHR10884">
    <property type="entry name" value="NADH DEHYDROGENASE UBIQUINONE IRON-SULFUR PROTEIN 3"/>
    <property type="match status" value="1"/>
</dbReference>
<dbReference type="Pfam" id="PF00329">
    <property type="entry name" value="Complex1_30kDa"/>
    <property type="match status" value="1"/>
</dbReference>
<dbReference type="SUPFAM" id="SSF143243">
    <property type="entry name" value="Nqo5-like"/>
    <property type="match status" value="1"/>
</dbReference>
<dbReference type="PROSITE" id="PS00542">
    <property type="entry name" value="COMPLEX1_30K"/>
    <property type="match status" value="1"/>
</dbReference>
<organism>
    <name type="scientific">Ipomoea purpurea</name>
    <name type="common">Common morning glory</name>
    <name type="synonym">Pharbitis purpurea</name>
    <dbReference type="NCBI Taxonomy" id="4121"/>
    <lineage>
        <taxon>Eukaryota</taxon>
        <taxon>Viridiplantae</taxon>
        <taxon>Streptophyta</taxon>
        <taxon>Embryophyta</taxon>
        <taxon>Tracheophyta</taxon>
        <taxon>Spermatophyta</taxon>
        <taxon>Magnoliopsida</taxon>
        <taxon>eudicotyledons</taxon>
        <taxon>Gunneridae</taxon>
        <taxon>Pentapetalae</taxon>
        <taxon>asterids</taxon>
        <taxon>lamiids</taxon>
        <taxon>Solanales</taxon>
        <taxon>Convolvulaceae</taxon>
        <taxon>Ipomoeeae</taxon>
        <taxon>Ipomoea</taxon>
    </lineage>
</organism>
<name>NDHJ_IPOPU</name>
<accession>A7Y3E0</accession>
<reference key="1">
    <citation type="journal article" date="2007" name="BMC Plant Biol.">
        <title>Complete plastid genome sequences suggest strong selection for retention of photosynthetic genes in the parasitic plant genus Cuscuta.</title>
        <authorList>
            <person name="McNeal J.R."/>
            <person name="Kuehl J.V."/>
            <person name="Boore J.L."/>
            <person name="dePamphilis C.W."/>
        </authorList>
    </citation>
    <scope>NUCLEOTIDE SEQUENCE [LARGE SCALE GENOMIC DNA]</scope>
</reference>
<comment type="function">
    <text evidence="1">NDH shuttles electrons from NAD(P)H:plastoquinone, via FMN and iron-sulfur (Fe-S) centers, to quinones in the photosynthetic chain and possibly in a chloroplast respiratory chain. The immediate electron acceptor for the enzyme in this species is believed to be plastoquinone. Couples the redox reaction to proton translocation, and thus conserves the redox energy in a proton gradient.</text>
</comment>
<comment type="catalytic activity">
    <reaction evidence="1">
        <text>a plastoquinone + NADH + (n+1) H(+)(in) = a plastoquinol + NAD(+) + n H(+)(out)</text>
        <dbReference type="Rhea" id="RHEA:42608"/>
        <dbReference type="Rhea" id="RHEA-COMP:9561"/>
        <dbReference type="Rhea" id="RHEA-COMP:9562"/>
        <dbReference type="ChEBI" id="CHEBI:15378"/>
        <dbReference type="ChEBI" id="CHEBI:17757"/>
        <dbReference type="ChEBI" id="CHEBI:57540"/>
        <dbReference type="ChEBI" id="CHEBI:57945"/>
        <dbReference type="ChEBI" id="CHEBI:62192"/>
    </reaction>
</comment>
<comment type="catalytic activity">
    <reaction evidence="1">
        <text>a plastoquinone + NADPH + (n+1) H(+)(in) = a plastoquinol + NADP(+) + n H(+)(out)</text>
        <dbReference type="Rhea" id="RHEA:42612"/>
        <dbReference type="Rhea" id="RHEA-COMP:9561"/>
        <dbReference type="Rhea" id="RHEA-COMP:9562"/>
        <dbReference type="ChEBI" id="CHEBI:15378"/>
        <dbReference type="ChEBI" id="CHEBI:17757"/>
        <dbReference type="ChEBI" id="CHEBI:57783"/>
        <dbReference type="ChEBI" id="CHEBI:58349"/>
        <dbReference type="ChEBI" id="CHEBI:62192"/>
    </reaction>
</comment>
<comment type="subunit">
    <text evidence="1">NDH is composed of at least 16 different subunits, 5 of which are encoded in the nucleus.</text>
</comment>
<comment type="subcellular location">
    <subcellularLocation>
        <location evidence="1">Plastid</location>
        <location evidence="1">Chloroplast thylakoid membrane</location>
        <topology evidence="1">Peripheral membrane protein</topology>
        <orientation evidence="1">Stromal side</orientation>
    </subcellularLocation>
</comment>
<comment type="similarity">
    <text evidence="1">Belongs to the complex I 30 kDa subunit family.</text>
</comment>
<keyword id="KW-0150">Chloroplast</keyword>
<keyword id="KW-0472">Membrane</keyword>
<keyword id="KW-0520">NAD</keyword>
<keyword id="KW-0521">NADP</keyword>
<keyword id="KW-0934">Plastid</keyword>
<keyword id="KW-0618">Plastoquinone</keyword>
<keyword id="KW-0874">Quinone</keyword>
<keyword id="KW-0793">Thylakoid</keyword>
<keyword id="KW-1278">Translocase</keyword>
<keyword id="KW-0813">Transport</keyword>